<feature type="transit peptide" description="Mitochondrion" evidence="1">
    <location>
        <begin position="1"/>
        <end position="60"/>
    </location>
</feature>
<feature type="chain" id="PRO_0000273250" description="Heat shock protein 75 kDa, mitochondrial">
    <location>
        <begin position="61"/>
        <end position="706"/>
    </location>
</feature>
<feature type="binding site" evidence="1">
    <location>
        <position position="121"/>
    </location>
    <ligand>
        <name>ATP</name>
        <dbReference type="ChEBI" id="CHEBI:30616"/>
    </ligand>
</feature>
<feature type="binding site" evidence="1">
    <location>
        <position position="160"/>
    </location>
    <ligand>
        <name>ATP</name>
        <dbReference type="ChEBI" id="CHEBI:30616"/>
    </ligand>
</feature>
<feature type="binding site" evidence="1">
    <location>
        <position position="173"/>
    </location>
    <ligand>
        <name>ATP</name>
        <dbReference type="ChEBI" id="CHEBI:30616"/>
    </ligand>
</feature>
<feature type="binding site" evidence="1">
    <location>
        <position position="207"/>
    </location>
    <ligand>
        <name>ATP</name>
        <dbReference type="ChEBI" id="CHEBI:30616"/>
    </ligand>
</feature>
<feature type="binding site" evidence="1">
    <location>
        <position position="404"/>
    </location>
    <ligand>
        <name>ATP</name>
        <dbReference type="ChEBI" id="CHEBI:30616"/>
    </ligand>
</feature>
<feature type="modified residue" description="Phosphoserine" evidence="5">
    <location>
        <position position="172"/>
    </location>
</feature>
<feature type="modified residue" description="Phosphothreonine" evidence="5">
    <location>
        <position position="176"/>
    </location>
</feature>
<feature type="modified residue" description="Phosphoserine" evidence="2">
    <location>
        <position position="196"/>
    </location>
</feature>
<feature type="modified residue" description="N6-acetyllysine" evidence="3">
    <location>
        <position position="264"/>
    </location>
</feature>
<feature type="modified residue" description="N6-acetyllysine" evidence="3">
    <location>
        <position position="326"/>
    </location>
</feature>
<feature type="modified residue" description="N6-acetyllysine" evidence="2">
    <location>
        <position position="334"/>
    </location>
</feature>
<feature type="modified residue" description="N6-acetyllysine" evidence="2">
    <location>
        <position position="426"/>
    </location>
</feature>
<feature type="modified residue" description="N6-acetyllysine" evidence="3">
    <location>
        <position position="433"/>
    </location>
</feature>
<feature type="modified residue" description="N6-acetyllysine" evidence="2">
    <location>
        <position position="468"/>
    </location>
</feature>
<feature type="modified residue" description="Phosphothreonine" evidence="2">
    <location>
        <position position="496"/>
    </location>
</feature>
<feature type="modified residue" description="Phosphoserine" evidence="2">
    <location>
        <position position="570"/>
    </location>
</feature>
<organism>
    <name type="scientific">Rattus norvegicus</name>
    <name type="common">Rat</name>
    <dbReference type="NCBI Taxonomy" id="10116"/>
    <lineage>
        <taxon>Eukaryota</taxon>
        <taxon>Metazoa</taxon>
        <taxon>Chordata</taxon>
        <taxon>Craniata</taxon>
        <taxon>Vertebrata</taxon>
        <taxon>Euteleostomi</taxon>
        <taxon>Mammalia</taxon>
        <taxon>Eutheria</taxon>
        <taxon>Euarchontoglires</taxon>
        <taxon>Glires</taxon>
        <taxon>Rodentia</taxon>
        <taxon>Myomorpha</taxon>
        <taxon>Muroidea</taxon>
        <taxon>Muridae</taxon>
        <taxon>Murinae</taxon>
        <taxon>Rattus</taxon>
    </lineage>
</organism>
<protein>
    <recommendedName>
        <fullName>Heat shock protein 75 kDa, mitochondrial</fullName>
        <shortName>HSP 75</shortName>
    </recommendedName>
    <alternativeName>
        <fullName>TNFR-associated protein 1</fullName>
    </alternativeName>
    <alternativeName>
        <fullName>Tumor necrosis factor type 1 receptor-associated protein</fullName>
        <shortName>TRAP-1</shortName>
    </alternativeName>
</protein>
<gene>
    <name type="primary">Trap1</name>
    <name type="synonym">Hsp75</name>
    <name evidence="2" type="synonym">Hspc5</name>
</gene>
<comment type="function">
    <text evidence="1">Chaperone that expresses an ATPase activity. Involved in maintaining mitochondrial function and polarization, downstream of PINK1 and mitochondrial complex I. Is a negative regulator of mitochondrial respiration able to modulate the balance between oxidative phosphorylation and aerobic glycolysis. The impact of TRAP1 on mitochondrial respiration is probably mediated by modulation of mitochondrial SRC and inhibition of SDHA.</text>
</comment>
<comment type="subunit">
    <text evidence="1">Binds to the intracellular domain of tumor necrosis factor type 1 receptor. Binds to RB1. Interacts with SRC. Interacts with SDHA.</text>
</comment>
<comment type="subcellular location">
    <subcellularLocation>
        <location evidence="1">Mitochondrion</location>
    </subcellularLocation>
    <subcellularLocation>
        <location evidence="1">Mitochondrion inner membrane</location>
    </subcellularLocation>
    <subcellularLocation>
        <location evidence="1">Mitochondrion matrix</location>
    </subcellularLocation>
</comment>
<comment type="similarity">
    <text evidence="4">Belongs to the heat shock protein 90 family.</text>
</comment>
<reference key="1">
    <citation type="journal article" date="2004" name="Genome Res.">
        <title>The status, quality, and expansion of the NIH full-length cDNA project: the Mammalian Gene Collection (MGC).</title>
        <authorList>
            <consortium name="The MGC Project Team"/>
        </authorList>
    </citation>
    <scope>NUCLEOTIDE SEQUENCE [LARGE SCALE MRNA]</scope>
    <source>
        <tissue>Testis</tissue>
    </source>
</reference>
<reference key="2">
    <citation type="submission" date="2006-12" db="UniProtKB">
        <authorList>
            <person name="Lubec G."/>
            <person name="Afjehi-Sadat L."/>
        </authorList>
    </citation>
    <scope>PROTEIN SEQUENCE OF 307-318 AND 442-451</scope>
    <scope>IDENTIFICATION BY MASS SPECTROMETRY</scope>
    <source>
        <strain>Sprague-Dawley</strain>
        <tissue>Spinal cord</tissue>
    </source>
</reference>
<reference key="3">
    <citation type="journal article" date="2006" name="Proc. Natl. Acad. Sci. U.S.A.">
        <title>Quantitative phosphoproteomics of vasopressin-sensitive renal cells: regulation of aquaporin-2 phosphorylation at two sites.</title>
        <authorList>
            <person name="Hoffert J.D."/>
            <person name="Pisitkun T."/>
            <person name="Wang G."/>
            <person name="Shen R.-F."/>
            <person name="Knepper M.A."/>
        </authorList>
    </citation>
    <scope>PHOSPHORYLATION [LARGE SCALE ANALYSIS] AT SER-172 AND THR-176</scope>
    <scope>IDENTIFICATION BY MASS SPECTROMETRY [LARGE SCALE ANALYSIS]</scope>
</reference>
<accession>Q5XHZ0</accession>
<proteinExistence type="evidence at protein level"/>
<keyword id="KW-0007">Acetylation</keyword>
<keyword id="KW-0067">ATP-binding</keyword>
<keyword id="KW-0143">Chaperone</keyword>
<keyword id="KW-0903">Direct protein sequencing</keyword>
<keyword id="KW-0472">Membrane</keyword>
<keyword id="KW-0496">Mitochondrion</keyword>
<keyword id="KW-0999">Mitochondrion inner membrane</keyword>
<keyword id="KW-0547">Nucleotide-binding</keyword>
<keyword id="KW-0597">Phosphoprotein</keyword>
<keyword id="KW-1185">Reference proteome</keyword>
<keyword id="KW-0809">Transit peptide</keyword>
<dbReference type="EMBL" id="BC083909">
    <property type="protein sequence ID" value="AAH83909.1"/>
    <property type="molecule type" value="mRNA"/>
</dbReference>
<dbReference type="RefSeq" id="NP_001034090.1">
    <property type="nucleotide sequence ID" value="NM_001039001.1"/>
</dbReference>
<dbReference type="SMR" id="Q5XHZ0"/>
<dbReference type="FunCoup" id="Q5XHZ0">
    <property type="interactions" value="2976"/>
</dbReference>
<dbReference type="IntAct" id="Q5XHZ0">
    <property type="interactions" value="1"/>
</dbReference>
<dbReference type="MINT" id="Q5XHZ0"/>
<dbReference type="STRING" id="10116.ENSRNOP00000008966"/>
<dbReference type="iPTMnet" id="Q5XHZ0"/>
<dbReference type="PhosphoSitePlus" id="Q5XHZ0"/>
<dbReference type="jPOST" id="Q5XHZ0"/>
<dbReference type="PaxDb" id="10116-ENSRNOP00000008966"/>
<dbReference type="GeneID" id="287069"/>
<dbReference type="KEGG" id="rno:287069"/>
<dbReference type="UCSC" id="RGD:1359733">
    <property type="organism name" value="rat"/>
</dbReference>
<dbReference type="AGR" id="RGD:1359733"/>
<dbReference type="CTD" id="10131"/>
<dbReference type="RGD" id="1359733">
    <property type="gene designation" value="Trap1"/>
</dbReference>
<dbReference type="VEuPathDB" id="HostDB:ENSRNOG00000005418"/>
<dbReference type="eggNOG" id="KOG0019">
    <property type="taxonomic scope" value="Eukaryota"/>
</dbReference>
<dbReference type="HOGENOM" id="CLU_006684_3_1_1"/>
<dbReference type="InParanoid" id="Q5XHZ0"/>
<dbReference type="OrthoDB" id="35008at9989"/>
<dbReference type="PhylomeDB" id="Q5XHZ0"/>
<dbReference type="TreeFam" id="TF315234"/>
<dbReference type="Reactome" id="R-RNO-71403">
    <property type="pathway name" value="Citric acid cycle (TCA cycle)"/>
</dbReference>
<dbReference type="PRO" id="PR:Q5XHZ0"/>
<dbReference type="Proteomes" id="UP000002494">
    <property type="component" value="Chromosome 10"/>
</dbReference>
<dbReference type="Bgee" id="ENSRNOG00000005418">
    <property type="expression patterns" value="Expressed in liver and 19 other cell types or tissues"/>
</dbReference>
<dbReference type="GO" id="GO:0071944">
    <property type="term" value="C:cell periphery"/>
    <property type="evidence" value="ECO:0000266"/>
    <property type="project" value="RGD"/>
</dbReference>
<dbReference type="GO" id="GO:0005743">
    <property type="term" value="C:mitochondrial inner membrane"/>
    <property type="evidence" value="ECO:0000314"/>
    <property type="project" value="ParkinsonsUK-UCL"/>
</dbReference>
<dbReference type="GO" id="GO:0005758">
    <property type="term" value="C:mitochondrial intermembrane space"/>
    <property type="evidence" value="ECO:0000314"/>
    <property type="project" value="ParkinsonsUK-UCL"/>
</dbReference>
<dbReference type="GO" id="GO:0005759">
    <property type="term" value="C:mitochondrial matrix"/>
    <property type="evidence" value="ECO:0000250"/>
    <property type="project" value="UniProtKB"/>
</dbReference>
<dbReference type="GO" id="GO:0005739">
    <property type="term" value="C:mitochondrion"/>
    <property type="evidence" value="ECO:0000266"/>
    <property type="project" value="RGD"/>
</dbReference>
<dbReference type="GO" id="GO:0005524">
    <property type="term" value="F:ATP binding"/>
    <property type="evidence" value="ECO:0000318"/>
    <property type="project" value="GO_Central"/>
</dbReference>
<dbReference type="GO" id="GO:0016887">
    <property type="term" value="F:ATP hydrolysis activity"/>
    <property type="evidence" value="ECO:0000318"/>
    <property type="project" value="GO_Central"/>
</dbReference>
<dbReference type="GO" id="GO:0140662">
    <property type="term" value="F:ATP-dependent protein folding chaperone"/>
    <property type="evidence" value="ECO:0007669"/>
    <property type="project" value="InterPro"/>
</dbReference>
<dbReference type="GO" id="GO:0019901">
    <property type="term" value="F:protein kinase binding"/>
    <property type="evidence" value="ECO:0000353"/>
    <property type="project" value="ParkinsonsUK-UCL"/>
</dbReference>
<dbReference type="GO" id="GO:0003723">
    <property type="term" value="F:RNA binding"/>
    <property type="evidence" value="ECO:0000250"/>
    <property type="project" value="ParkinsonsUK-UCL"/>
</dbReference>
<dbReference type="GO" id="GO:0051082">
    <property type="term" value="F:unfolded protein binding"/>
    <property type="evidence" value="ECO:0000318"/>
    <property type="project" value="GO_Central"/>
</dbReference>
<dbReference type="GO" id="GO:1901856">
    <property type="term" value="P:negative regulation of cellular respiration"/>
    <property type="evidence" value="ECO:0000250"/>
    <property type="project" value="UniProtKB"/>
</dbReference>
<dbReference type="GO" id="GO:1903751">
    <property type="term" value="P:negative regulation of intrinsic apoptotic signaling pathway in response to hydrogen peroxide"/>
    <property type="evidence" value="ECO:0000315"/>
    <property type="project" value="ParkinsonsUK-UCL"/>
</dbReference>
<dbReference type="GO" id="GO:0006457">
    <property type="term" value="P:protein folding"/>
    <property type="evidence" value="ECO:0000318"/>
    <property type="project" value="GO_Central"/>
</dbReference>
<dbReference type="GO" id="GO:0009386">
    <property type="term" value="P:translational attenuation"/>
    <property type="evidence" value="ECO:0000266"/>
    <property type="project" value="RGD"/>
</dbReference>
<dbReference type="CDD" id="cd16927">
    <property type="entry name" value="HATPase_Hsp90-like"/>
    <property type="match status" value="1"/>
</dbReference>
<dbReference type="FunFam" id="1.20.120.790:FF:000004">
    <property type="entry name" value="Heat shock protein 75 kDa"/>
    <property type="match status" value="1"/>
</dbReference>
<dbReference type="FunFam" id="3.30.230.80:FF:000004">
    <property type="entry name" value="Heat shock protein 75 kDa"/>
    <property type="match status" value="1"/>
</dbReference>
<dbReference type="FunFam" id="3.30.565.10:FF:000021">
    <property type="entry name" value="Heat shock protein 75 kDa, mitochondrial"/>
    <property type="match status" value="1"/>
</dbReference>
<dbReference type="FunFam" id="3.40.50.11260:FF:000004">
    <property type="entry name" value="Heat shock protein 75 mitochondrial"/>
    <property type="match status" value="1"/>
</dbReference>
<dbReference type="Gene3D" id="3.30.230.80">
    <property type="match status" value="1"/>
</dbReference>
<dbReference type="Gene3D" id="3.40.50.11260">
    <property type="match status" value="1"/>
</dbReference>
<dbReference type="Gene3D" id="1.20.120.790">
    <property type="entry name" value="Heat shock protein 90, C-terminal domain"/>
    <property type="match status" value="1"/>
</dbReference>
<dbReference type="Gene3D" id="3.30.565.10">
    <property type="entry name" value="Histidine kinase-like ATPase, C-terminal domain"/>
    <property type="match status" value="1"/>
</dbReference>
<dbReference type="HAMAP" id="MF_00505">
    <property type="entry name" value="HSP90"/>
    <property type="match status" value="1"/>
</dbReference>
<dbReference type="InterPro" id="IPR036890">
    <property type="entry name" value="HATPase_C_sf"/>
</dbReference>
<dbReference type="InterPro" id="IPR037196">
    <property type="entry name" value="HSP90_C"/>
</dbReference>
<dbReference type="InterPro" id="IPR001404">
    <property type="entry name" value="Hsp90_fam"/>
</dbReference>
<dbReference type="InterPro" id="IPR020575">
    <property type="entry name" value="Hsp90_N"/>
</dbReference>
<dbReference type="InterPro" id="IPR020568">
    <property type="entry name" value="Ribosomal_Su5_D2-typ_SF"/>
</dbReference>
<dbReference type="NCBIfam" id="NF003555">
    <property type="entry name" value="PRK05218.1"/>
    <property type="match status" value="1"/>
</dbReference>
<dbReference type="PANTHER" id="PTHR11528">
    <property type="entry name" value="HEAT SHOCK PROTEIN 90 FAMILY MEMBER"/>
    <property type="match status" value="1"/>
</dbReference>
<dbReference type="Pfam" id="PF13589">
    <property type="entry name" value="HATPase_c_3"/>
    <property type="match status" value="1"/>
</dbReference>
<dbReference type="Pfam" id="PF00183">
    <property type="entry name" value="HSP90"/>
    <property type="match status" value="1"/>
</dbReference>
<dbReference type="PIRSF" id="PIRSF002583">
    <property type="entry name" value="Hsp90"/>
    <property type="match status" value="1"/>
</dbReference>
<dbReference type="PRINTS" id="PR00775">
    <property type="entry name" value="HEATSHOCK90"/>
</dbReference>
<dbReference type="SMART" id="SM00387">
    <property type="entry name" value="HATPase_c"/>
    <property type="match status" value="1"/>
</dbReference>
<dbReference type="SUPFAM" id="SSF55874">
    <property type="entry name" value="ATPase domain of HSP90 chaperone/DNA topoisomerase II/histidine kinase"/>
    <property type="match status" value="1"/>
</dbReference>
<dbReference type="SUPFAM" id="SSF110942">
    <property type="entry name" value="HSP90 C-terminal domain"/>
    <property type="match status" value="1"/>
</dbReference>
<dbReference type="SUPFAM" id="SSF54211">
    <property type="entry name" value="Ribosomal protein S5 domain 2-like"/>
    <property type="match status" value="1"/>
</dbReference>
<name>TRAP1_RAT</name>
<sequence length="706" mass="80461">MARELRALLLWGRGLQSALRAPALAGVRRGKPVLHLQKTTVHFRDPTQSLASGISAGQLYSTQAAEDKKEEALHSIISNTEAVQGSVSKHEFQAETKKLLDIVARSLYSEKEVFIRELISNASDALEKLRHKRVCEGQVLPEMEIHLQTDAEKGTITIQDTGIGMTKEELVSNLGTIARSGSKAFLEALQHQAETSSRIIGQFGVGFYSAFMVADKVEVYSRPAAPESPGYQWLSDGSGVFEIAEASGVRPGTKIIIHLKSDCKDFANESRVQDVVTKYSNFVSFPLYLNGRRINTLQAIWMMDPKDISEFQHEEFYRYIAQAYDKPRFILHYKTDAPLNIRSIFYVPEMKPSMFDVSRELGSSVALYSRKVLIQTKATDILPKWLRFVRGVVDSEDIPLNLSRELLQESALIRKLRDVLQQRLIKFFIDQSKKDAEKYAKFFEDYGLFMREGIVTTAEQDIKEDIAKLLRYESSALPAGQLTSLSDYASRMQAGTRNIYYLCAPNRHLAEHSPYYEAMKQKQTEVLFCYEQFDELTLLHLREFDKKKLISVETDIVVDHYKEEKFEDTSPAGERLSEKETEELMAWMRNALGSRVTNVKVTFRLDTHPAMVTVLEMGAARHFLRMQQLAKTQEERAQLLQPTLEINPRHTLIKKLNQLREREPELAQLLVDQIYENAMIAAGLVDDPRAMVGRLNDLLVKALERH</sequence>
<evidence type="ECO:0000250" key="1"/>
<evidence type="ECO:0000250" key="2">
    <source>
        <dbReference type="UniProtKB" id="Q12931"/>
    </source>
</evidence>
<evidence type="ECO:0000250" key="3">
    <source>
        <dbReference type="UniProtKB" id="Q9CQN1"/>
    </source>
</evidence>
<evidence type="ECO:0000305" key="4"/>
<evidence type="ECO:0007744" key="5">
    <source>
    </source>
</evidence>